<proteinExistence type="inferred from homology"/>
<reference key="1">
    <citation type="journal article" date="2006" name="J. Bacteriol.">
        <title>Comparative genomic evidence for a close relationship between the dimorphic prosthecate bacteria Hyphomonas neptunium and Caulobacter crescentus.</title>
        <authorList>
            <person name="Badger J.H."/>
            <person name="Hoover T.R."/>
            <person name="Brun Y.V."/>
            <person name="Weiner R.M."/>
            <person name="Laub M.T."/>
            <person name="Alexandre G."/>
            <person name="Mrazek J."/>
            <person name="Ren Q."/>
            <person name="Paulsen I.T."/>
            <person name="Nelson K.E."/>
            <person name="Khouri H.M."/>
            <person name="Radune D."/>
            <person name="Sosa J."/>
            <person name="Dodson R.J."/>
            <person name="Sullivan S.A."/>
            <person name="Rosovitz M.J."/>
            <person name="Madupu R."/>
            <person name="Brinkac L.M."/>
            <person name="Durkin A.S."/>
            <person name="Daugherty S.C."/>
            <person name="Kothari S.P."/>
            <person name="Giglio M.G."/>
            <person name="Zhou L."/>
            <person name="Haft D.H."/>
            <person name="Selengut J.D."/>
            <person name="Davidsen T.M."/>
            <person name="Yang Q."/>
            <person name="Zafar N."/>
            <person name="Ward N.L."/>
        </authorList>
    </citation>
    <scope>NUCLEOTIDE SEQUENCE [LARGE SCALE GENOMIC DNA]</scope>
    <source>
        <strain>ATCC 15444</strain>
    </source>
</reference>
<dbReference type="EC" id="6.3.2.8" evidence="1"/>
<dbReference type="EMBL" id="CP000158">
    <property type="protein sequence ID" value="ABI75746.1"/>
    <property type="molecule type" value="Genomic_DNA"/>
</dbReference>
<dbReference type="RefSeq" id="WP_011647996.1">
    <property type="nucleotide sequence ID" value="NC_008358.1"/>
</dbReference>
<dbReference type="SMR" id="Q0BXU4"/>
<dbReference type="STRING" id="228405.HNE_3022"/>
<dbReference type="KEGG" id="hne:HNE_3022"/>
<dbReference type="eggNOG" id="COG0773">
    <property type="taxonomic scope" value="Bacteria"/>
</dbReference>
<dbReference type="HOGENOM" id="CLU_028104_2_1_5"/>
<dbReference type="UniPathway" id="UPA00219"/>
<dbReference type="Proteomes" id="UP000001959">
    <property type="component" value="Chromosome"/>
</dbReference>
<dbReference type="GO" id="GO:0005737">
    <property type="term" value="C:cytoplasm"/>
    <property type="evidence" value="ECO:0007669"/>
    <property type="project" value="UniProtKB-SubCell"/>
</dbReference>
<dbReference type="GO" id="GO:0005524">
    <property type="term" value="F:ATP binding"/>
    <property type="evidence" value="ECO:0007669"/>
    <property type="project" value="UniProtKB-UniRule"/>
</dbReference>
<dbReference type="GO" id="GO:0008763">
    <property type="term" value="F:UDP-N-acetylmuramate-L-alanine ligase activity"/>
    <property type="evidence" value="ECO:0007669"/>
    <property type="project" value="UniProtKB-UniRule"/>
</dbReference>
<dbReference type="GO" id="GO:0051301">
    <property type="term" value="P:cell division"/>
    <property type="evidence" value="ECO:0007669"/>
    <property type="project" value="UniProtKB-KW"/>
</dbReference>
<dbReference type="GO" id="GO:0071555">
    <property type="term" value="P:cell wall organization"/>
    <property type="evidence" value="ECO:0007669"/>
    <property type="project" value="UniProtKB-KW"/>
</dbReference>
<dbReference type="GO" id="GO:0009252">
    <property type="term" value="P:peptidoglycan biosynthetic process"/>
    <property type="evidence" value="ECO:0007669"/>
    <property type="project" value="UniProtKB-UniRule"/>
</dbReference>
<dbReference type="GO" id="GO:0008360">
    <property type="term" value="P:regulation of cell shape"/>
    <property type="evidence" value="ECO:0007669"/>
    <property type="project" value="UniProtKB-KW"/>
</dbReference>
<dbReference type="Gene3D" id="3.90.190.20">
    <property type="entry name" value="Mur ligase, C-terminal domain"/>
    <property type="match status" value="1"/>
</dbReference>
<dbReference type="Gene3D" id="3.40.1190.10">
    <property type="entry name" value="Mur-like, catalytic domain"/>
    <property type="match status" value="1"/>
</dbReference>
<dbReference type="Gene3D" id="3.40.50.720">
    <property type="entry name" value="NAD(P)-binding Rossmann-like Domain"/>
    <property type="match status" value="1"/>
</dbReference>
<dbReference type="HAMAP" id="MF_00046">
    <property type="entry name" value="MurC"/>
    <property type="match status" value="1"/>
</dbReference>
<dbReference type="InterPro" id="IPR036565">
    <property type="entry name" value="Mur-like_cat_sf"/>
</dbReference>
<dbReference type="InterPro" id="IPR004101">
    <property type="entry name" value="Mur_ligase_C"/>
</dbReference>
<dbReference type="InterPro" id="IPR036615">
    <property type="entry name" value="Mur_ligase_C_dom_sf"/>
</dbReference>
<dbReference type="InterPro" id="IPR013221">
    <property type="entry name" value="Mur_ligase_cen"/>
</dbReference>
<dbReference type="InterPro" id="IPR000713">
    <property type="entry name" value="Mur_ligase_N"/>
</dbReference>
<dbReference type="InterPro" id="IPR050061">
    <property type="entry name" value="MurCDEF_pg_biosynth"/>
</dbReference>
<dbReference type="InterPro" id="IPR005758">
    <property type="entry name" value="UDP-N-AcMur_Ala_ligase_MurC"/>
</dbReference>
<dbReference type="NCBIfam" id="TIGR01082">
    <property type="entry name" value="murC"/>
    <property type="match status" value="1"/>
</dbReference>
<dbReference type="PANTHER" id="PTHR43445:SF3">
    <property type="entry name" value="UDP-N-ACETYLMURAMATE--L-ALANINE LIGASE"/>
    <property type="match status" value="1"/>
</dbReference>
<dbReference type="PANTHER" id="PTHR43445">
    <property type="entry name" value="UDP-N-ACETYLMURAMATE--L-ALANINE LIGASE-RELATED"/>
    <property type="match status" value="1"/>
</dbReference>
<dbReference type="Pfam" id="PF01225">
    <property type="entry name" value="Mur_ligase"/>
    <property type="match status" value="1"/>
</dbReference>
<dbReference type="Pfam" id="PF02875">
    <property type="entry name" value="Mur_ligase_C"/>
    <property type="match status" value="1"/>
</dbReference>
<dbReference type="Pfam" id="PF08245">
    <property type="entry name" value="Mur_ligase_M"/>
    <property type="match status" value="1"/>
</dbReference>
<dbReference type="SUPFAM" id="SSF51984">
    <property type="entry name" value="MurCD N-terminal domain"/>
    <property type="match status" value="1"/>
</dbReference>
<dbReference type="SUPFAM" id="SSF53623">
    <property type="entry name" value="MurD-like peptide ligases, catalytic domain"/>
    <property type="match status" value="1"/>
</dbReference>
<dbReference type="SUPFAM" id="SSF53244">
    <property type="entry name" value="MurD-like peptide ligases, peptide-binding domain"/>
    <property type="match status" value="1"/>
</dbReference>
<sequence>MTTPTPFPVGPAHIVGIGGIGMSGIADVMLTMGYEVQGSDVSDSANVERLRARGVKVFIGHKPENVVGAGTVIISTAIRRDNPEVQAARAAGIPVVRRANMLAEITRLKYTVCVAGTHGKTTTTSLVACLLDGAGIDPTVINGGIIHAYGSNYKAGESDWMVVESDESDGTFAKLHPTCAIVTNIDPEHMDHYGTMDKLREAFDTFVENLPFYGFAVLCTDHPEVQALAARVTDRRRITYGFNLQADVRAVNLSTDLKGAHFDVEIRRGAGEAPRRIEGLTLPMAGEHNVQNALAAITVALELGASDEQISASLASFGGVKRRFTPVGEWLPAAGGEPVKIIDDYGHHPVEIAAVLKAARAMQADRTVIAVCQPHRYSRLKDLFEDFSRCFDQADHVLVAPVYEAGETPIPGITHETLVRSIQRNGHRSARALPSLAELPEVVKTLAGPGAMVVCLGAGDITRYAGELEARLKG</sequence>
<feature type="chain" id="PRO_0000336837" description="UDP-N-acetylmuramate--L-alanine ligase">
    <location>
        <begin position="1"/>
        <end position="474"/>
    </location>
</feature>
<feature type="binding site" evidence="1">
    <location>
        <begin position="116"/>
        <end position="122"/>
    </location>
    <ligand>
        <name>ATP</name>
        <dbReference type="ChEBI" id="CHEBI:30616"/>
    </ligand>
</feature>
<accession>Q0BXU4</accession>
<comment type="function">
    <text evidence="1">Cell wall formation.</text>
</comment>
<comment type="catalytic activity">
    <reaction evidence="1">
        <text>UDP-N-acetyl-alpha-D-muramate + L-alanine + ATP = UDP-N-acetyl-alpha-D-muramoyl-L-alanine + ADP + phosphate + H(+)</text>
        <dbReference type="Rhea" id="RHEA:23372"/>
        <dbReference type="ChEBI" id="CHEBI:15378"/>
        <dbReference type="ChEBI" id="CHEBI:30616"/>
        <dbReference type="ChEBI" id="CHEBI:43474"/>
        <dbReference type="ChEBI" id="CHEBI:57972"/>
        <dbReference type="ChEBI" id="CHEBI:70757"/>
        <dbReference type="ChEBI" id="CHEBI:83898"/>
        <dbReference type="ChEBI" id="CHEBI:456216"/>
        <dbReference type="EC" id="6.3.2.8"/>
    </reaction>
</comment>
<comment type="pathway">
    <text evidence="1">Cell wall biogenesis; peptidoglycan biosynthesis.</text>
</comment>
<comment type="subcellular location">
    <subcellularLocation>
        <location evidence="1">Cytoplasm</location>
    </subcellularLocation>
</comment>
<comment type="similarity">
    <text evidence="1">Belongs to the MurCDEF family.</text>
</comment>
<gene>
    <name evidence="1" type="primary">murC</name>
    <name type="ordered locus">HNE_3022</name>
</gene>
<protein>
    <recommendedName>
        <fullName evidence="1">UDP-N-acetylmuramate--L-alanine ligase</fullName>
        <ecNumber evidence="1">6.3.2.8</ecNumber>
    </recommendedName>
    <alternativeName>
        <fullName evidence="1">UDP-N-acetylmuramoyl-L-alanine synthetase</fullName>
    </alternativeName>
</protein>
<organism>
    <name type="scientific">Hyphomonas neptunium (strain ATCC 15444)</name>
    <dbReference type="NCBI Taxonomy" id="228405"/>
    <lineage>
        <taxon>Bacteria</taxon>
        <taxon>Pseudomonadati</taxon>
        <taxon>Pseudomonadota</taxon>
        <taxon>Alphaproteobacteria</taxon>
        <taxon>Hyphomonadales</taxon>
        <taxon>Hyphomonadaceae</taxon>
        <taxon>Hyphomonas</taxon>
    </lineage>
</organism>
<name>MURC_HYPNA</name>
<evidence type="ECO:0000255" key="1">
    <source>
        <dbReference type="HAMAP-Rule" id="MF_00046"/>
    </source>
</evidence>
<keyword id="KW-0067">ATP-binding</keyword>
<keyword id="KW-0131">Cell cycle</keyword>
<keyword id="KW-0132">Cell division</keyword>
<keyword id="KW-0133">Cell shape</keyword>
<keyword id="KW-0961">Cell wall biogenesis/degradation</keyword>
<keyword id="KW-0963">Cytoplasm</keyword>
<keyword id="KW-0436">Ligase</keyword>
<keyword id="KW-0547">Nucleotide-binding</keyword>
<keyword id="KW-0573">Peptidoglycan synthesis</keyword>
<keyword id="KW-1185">Reference proteome</keyword>